<proteinExistence type="inferred from homology"/>
<evidence type="ECO:0000255" key="1">
    <source>
        <dbReference type="HAMAP-Rule" id="MF_00186"/>
    </source>
</evidence>
<dbReference type="EC" id="2.7.1.30" evidence="1"/>
<dbReference type="EMBL" id="AL445563">
    <property type="protein sequence ID" value="CAC13394.1"/>
    <property type="molecule type" value="Genomic_DNA"/>
</dbReference>
<dbReference type="PIR" id="E90539">
    <property type="entry name" value="E90539"/>
</dbReference>
<dbReference type="RefSeq" id="WP_010925025.1">
    <property type="nucleotide sequence ID" value="NC_002771.1"/>
</dbReference>
<dbReference type="SMR" id="Q98QY9"/>
<dbReference type="STRING" id="272635.gene:17576808"/>
<dbReference type="KEGG" id="mpu:MYPU_2210"/>
<dbReference type="eggNOG" id="COG0554">
    <property type="taxonomic scope" value="Bacteria"/>
</dbReference>
<dbReference type="HOGENOM" id="CLU_009281_2_3_14"/>
<dbReference type="BioCyc" id="MPUL272635:G1GT6-220-MONOMER"/>
<dbReference type="UniPathway" id="UPA00618">
    <property type="reaction ID" value="UER00672"/>
</dbReference>
<dbReference type="Proteomes" id="UP000000528">
    <property type="component" value="Chromosome"/>
</dbReference>
<dbReference type="GO" id="GO:0005829">
    <property type="term" value="C:cytosol"/>
    <property type="evidence" value="ECO:0007669"/>
    <property type="project" value="TreeGrafter"/>
</dbReference>
<dbReference type="GO" id="GO:0005524">
    <property type="term" value="F:ATP binding"/>
    <property type="evidence" value="ECO:0007669"/>
    <property type="project" value="UniProtKB-UniRule"/>
</dbReference>
<dbReference type="GO" id="GO:0004370">
    <property type="term" value="F:glycerol kinase activity"/>
    <property type="evidence" value="ECO:0000250"/>
    <property type="project" value="UniProtKB"/>
</dbReference>
<dbReference type="GO" id="GO:0019563">
    <property type="term" value="P:glycerol catabolic process"/>
    <property type="evidence" value="ECO:0007669"/>
    <property type="project" value="UniProtKB-UniRule"/>
</dbReference>
<dbReference type="GO" id="GO:0006071">
    <property type="term" value="P:glycerol metabolic process"/>
    <property type="evidence" value="ECO:0000250"/>
    <property type="project" value="UniProtKB"/>
</dbReference>
<dbReference type="GO" id="GO:0006072">
    <property type="term" value="P:glycerol-3-phosphate metabolic process"/>
    <property type="evidence" value="ECO:0007669"/>
    <property type="project" value="InterPro"/>
</dbReference>
<dbReference type="CDD" id="cd07786">
    <property type="entry name" value="FGGY_EcGK_like"/>
    <property type="match status" value="1"/>
</dbReference>
<dbReference type="FunFam" id="3.30.420.40:FF:000007">
    <property type="entry name" value="Glycerol kinase"/>
    <property type="match status" value="1"/>
</dbReference>
<dbReference type="FunFam" id="3.30.420.40:FF:000008">
    <property type="entry name" value="Glycerol kinase"/>
    <property type="match status" value="1"/>
</dbReference>
<dbReference type="Gene3D" id="3.30.420.40">
    <property type="match status" value="2"/>
</dbReference>
<dbReference type="HAMAP" id="MF_00186">
    <property type="entry name" value="Glycerol_kin"/>
    <property type="match status" value="1"/>
</dbReference>
<dbReference type="InterPro" id="IPR043129">
    <property type="entry name" value="ATPase_NBD"/>
</dbReference>
<dbReference type="InterPro" id="IPR000577">
    <property type="entry name" value="Carb_kinase_FGGY"/>
</dbReference>
<dbReference type="InterPro" id="IPR018483">
    <property type="entry name" value="Carb_kinase_FGGY_CS"/>
</dbReference>
<dbReference type="InterPro" id="IPR018485">
    <property type="entry name" value="FGGY_C"/>
</dbReference>
<dbReference type="InterPro" id="IPR018484">
    <property type="entry name" value="FGGY_N"/>
</dbReference>
<dbReference type="InterPro" id="IPR005999">
    <property type="entry name" value="Glycerol_kin"/>
</dbReference>
<dbReference type="NCBIfam" id="TIGR01311">
    <property type="entry name" value="glycerol_kin"/>
    <property type="match status" value="1"/>
</dbReference>
<dbReference type="NCBIfam" id="NF000756">
    <property type="entry name" value="PRK00047.1"/>
    <property type="match status" value="1"/>
</dbReference>
<dbReference type="PANTHER" id="PTHR10196:SF69">
    <property type="entry name" value="GLYCEROL KINASE"/>
    <property type="match status" value="1"/>
</dbReference>
<dbReference type="PANTHER" id="PTHR10196">
    <property type="entry name" value="SUGAR KINASE"/>
    <property type="match status" value="1"/>
</dbReference>
<dbReference type="Pfam" id="PF02782">
    <property type="entry name" value="FGGY_C"/>
    <property type="match status" value="1"/>
</dbReference>
<dbReference type="Pfam" id="PF00370">
    <property type="entry name" value="FGGY_N"/>
    <property type="match status" value="1"/>
</dbReference>
<dbReference type="PIRSF" id="PIRSF000538">
    <property type="entry name" value="GlpK"/>
    <property type="match status" value="1"/>
</dbReference>
<dbReference type="SUPFAM" id="SSF53067">
    <property type="entry name" value="Actin-like ATPase domain"/>
    <property type="match status" value="2"/>
</dbReference>
<dbReference type="PROSITE" id="PS00933">
    <property type="entry name" value="FGGY_KINASES_1"/>
    <property type="match status" value="1"/>
</dbReference>
<dbReference type="PROSITE" id="PS00445">
    <property type="entry name" value="FGGY_KINASES_2"/>
    <property type="match status" value="1"/>
</dbReference>
<accession>Q98QY9</accession>
<comment type="function">
    <text evidence="1">Key enzyme in the regulation of glycerol uptake and metabolism. Catalyzes the phosphorylation of glycerol to yield sn-glycerol 3-phosphate.</text>
</comment>
<comment type="catalytic activity">
    <reaction evidence="1">
        <text>glycerol + ATP = sn-glycerol 3-phosphate + ADP + H(+)</text>
        <dbReference type="Rhea" id="RHEA:21644"/>
        <dbReference type="ChEBI" id="CHEBI:15378"/>
        <dbReference type="ChEBI" id="CHEBI:17754"/>
        <dbReference type="ChEBI" id="CHEBI:30616"/>
        <dbReference type="ChEBI" id="CHEBI:57597"/>
        <dbReference type="ChEBI" id="CHEBI:456216"/>
        <dbReference type="EC" id="2.7.1.30"/>
    </reaction>
</comment>
<comment type="activity regulation">
    <text evidence="1">Inhibited by fructose 1,6-bisphosphate (FBP).</text>
</comment>
<comment type="pathway">
    <text evidence="1">Polyol metabolism; glycerol degradation via glycerol kinase pathway; sn-glycerol 3-phosphate from glycerol: step 1/1.</text>
</comment>
<comment type="similarity">
    <text evidence="1">Belongs to the FGGY kinase family.</text>
</comment>
<feature type="chain" id="PRO_0000059470" description="Glycerol kinase">
    <location>
        <begin position="1"/>
        <end position="507"/>
    </location>
</feature>
<feature type="binding site" evidence="1">
    <location>
        <position position="15"/>
    </location>
    <ligand>
        <name>ADP</name>
        <dbReference type="ChEBI" id="CHEBI:456216"/>
    </ligand>
</feature>
<feature type="binding site" evidence="1">
    <location>
        <position position="15"/>
    </location>
    <ligand>
        <name>ATP</name>
        <dbReference type="ChEBI" id="CHEBI:30616"/>
    </ligand>
</feature>
<feature type="binding site" evidence="1">
    <location>
        <position position="15"/>
    </location>
    <ligand>
        <name>sn-glycerol 3-phosphate</name>
        <dbReference type="ChEBI" id="CHEBI:57597"/>
    </ligand>
</feature>
<feature type="binding site" evidence="1">
    <location>
        <position position="16"/>
    </location>
    <ligand>
        <name>ATP</name>
        <dbReference type="ChEBI" id="CHEBI:30616"/>
    </ligand>
</feature>
<feature type="binding site" evidence="1">
    <location>
        <position position="17"/>
    </location>
    <ligand>
        <name>ATP</name>
        <dbReference type="ChEBI" id="CHEBI:30616"/>
    </ligand>
</feature>
<feature type="binding site" evidence="1">
    <location>
        <position position="19"/>
    </location>
    <ligand>
        <name>ADP</name>
        <dbReference type="ChEBI" id="CHEBI:456216"/>
    </ligand>
</feature>
<feature type="binding site" evidence="1">
    <location>
        <position position="85"/>
    </location>
    <ligand>
        <name>glycerol</name>
        <dbReference type="ChEBI" id="CHEBI:17754"/>
    </ligand>
</feature>
<feature type="binding site" evidence="1">
    <location>
        <position position="85"/>
    </location>
    <ligand>
        <name>sn-glycerol 3-phosphate</name>
        <dbReference type="ChEBI" id="CHEBI:57597"/>
    </ligand>
</feature>
<feature type="binding site" evidence="1">
    <location>
        <position position="86"/>
    </location>
    <ligand>
        <name>glycerol</name>
        <dbReference type="ChEBI" id="CHEBI:17754"/>
    </ligand>
</feature>
<feature type="binding site" evidence="1">
    <location>
        <position position="86"/>
    </location>
    <ligand>
        <name>sn-glycerol 3-phosphate</name>
        <dbReference type="ChEBI" id="CHEBI:57597"/>
    </ligand>
</feature>
<feature type="binding site" evidence="1">
    <location>
        <position position="137"/>
    </location>
    <ligand>
        <name>glycerol</name>
        <dbReference type="ChEBI" id="CHEBI:17754"/>
    </ligand>
</feature>
<feature type="binding site" evidence="1">
    <location>
        <position position="137"/>
    </location>
    <ligand>
        <name>sn-glycerol 3-phosphate</name>
        <dbReference type="ChEBI" id="CHEBI:57597"/>
    </ligand>
</feature>
<feature type="binding site" evidence="1">
    <location>
        <position position="250"/>
    </location>
    <ligand>
        <name>glycerol</name>
        <dbReference type="ChEBI" id="CHEBI:17754"/>
    </ligand>
</feature>
<feature type="binding site" evidence="1">
    <location>
        <position position="250"/>
    </location>
    <ligand>
        <name>sn-glycerol 3-phosphate</name>
        <dbReference type="ChEBI" id="CHEBI:57597"/>
    </ligand>
</feature>
<feature type="binding site" evidence="1">
    <location>
        <position position="251"/>
    </location>
    <ligand>
        <name>glycerol</name>
        <dbReference type="ChEBI" id="CHEBI:17754"/>
    </ligand>
</feature>
<feature type="binding site" evidence="1">
    <location>
        <position position="272"/>
    </location>
    <ligand>
        <name>ADP</name>
        <dbReference type="ChEBI" id="CHEBI:456216"/>
    </ligand>
</feature>
<feature type="binding site" evidence="1">
    <location>
        <position position="272"/>
    </location>
    <ligand>
        <name>ATP</name>
        <dbReference type="ChEBI" id="CHEBI:30616"/>
    </ligand>
</feature>
<feature type="binding site" evidence="1">
    <location>
        <position position="316"/>
    </location>
    <ligand>
        <name>ADP</name>
        <dbReference type="ChEBI" id="CHEBI:456216"/>
    </ligand>
</feature>
<feature type="binding site" evidence="1">
    <location>
        <position position="316"/>
    </location>
    <ligand>
        <name>ATP</name>
        <dbReference type="ChEBI" id="CHEBI:30616"/>
    </ligand>
</feature>
<feature type="binding site" evidence="1">
    <location>
        <position position="320"/>
    </location>
    <ligand>
        <name>ATP</name>
        <dbReference type="ChEBI" id="CHEBI:30616"/>
    </ligand>
</feature>
<feature type="binding site" evidence="1">
    <location>
        <position position="417"/>
    </location>
    <ligand>
        <name>ADP</name>
        <dbReference type="ChEBI" id="CHEBI:456216"/>
    </ligand>
</feature>
<feature type="binding site" evidence="1">
    <location>
        <position position="417"/>
    </location>
    <ligand>
        <name>ATP</name>
        <dbReference type="ChEBI" id="CHEBI:30616"/>
    </ligand>
</feature>
<protein>
    <recommendedName>
        <fullName evidence="1">Glycerol kinase</fullName>
        <ecNumber evidence="1">2.7.1.30</ecNumber>
    </recommendedName>
    <alternativeName>
        <fullName evidence="1">ATP:glycerol 3-phosphotransferase</fullName>
    </alternativeName>
    <alternativeName>
        <fullName evidence="1">Glycerokinase</fullName>
        <shortName evidence="1">GK</shortName>
    </alternativeName>
</protein>
<gene>
    <name evidence="1" type="primary">glpK</name>
    <name type="ordered locus">MYPU_2210</name>
</gene>
<keyword id="KW-0067">ATP-binding</keyword>
<keyword id="KW-0319">Glycerol metabolism</keyword>
<keyword id="KW-0418">Kinase</keyword>
<keyword id="KW-0547">Nucleotide-binding</keyword>
<keyword id="KW-1185">Reference proteome</keyword>
<keyword id="KW-0808">Transferase</keyword>
<reference key="1">
    <citation type="journal article" date="2001" name="Nucleic Acids Res.">
        <title>The complete genome sequence of the murine respiratory pathogen Mycoplasma pulmonis.</title>
        <authorList>
            <person name="Chambaud I."/>
            <person name="Heilig R."/>
            <person name="Ferris S."/>
            <person name="Barbe V."/>
            <person name="Samson D."/>
            <person name="Galisson F."/>
            <person name="Moszer I."/>
            <person name="Dybvig K."/>
            <person name="Wroblewski H."/>
            <person name="Viari A."/>
            <person name="Rocha E.P.C."/>
            <person name="Blanchard A."/>
        </authorList>
    </citation>
    <scope>NUCLEOTIDE SEQUENCE [LARGE SCALE GENOMIC DNA]</scope>
    <source>
        <strain>UAB CTIP</strain>
    </source>
</reference>
<name>GLPK_MYCPU</name>
<organism>
    <name type="scientific">Mycoplasmopsis pulmonis (strain UAB CTIP)</name>
    <name type="common">Mycoplasma pulmonis</name>
    <dbReference type="NCBI Taxonomy" id="272635"/>
    <lineage>
        <taxon>Bacteria</taxon>
        <taxon>Bacillati</taxon>
        <taxon>Mycoplasmatota</taxon>
        <taxon>Mycoplasmoidales</taxon>
        <taxon>Metamycoplasmataceae</taxon>
        <taxon>Mycoplasmopsis</taxon>
    </lineage>
</organism>
<sequence length="507" mass="56680">MENNEKYIITLDSGTTSCRSLIVNKKGEIIAIAQNEFSQYFPKSGWVEHDPLEIWNTQLSTMQSVKNKAQIKSSDIVALGITNQRETIVVWDKDTGLPVYNAIVWQDVRTSSFCDQMIAENKTEFFREKTGLIINPYFSATKLKWILENVPLAKEKLAKGKLLAGTIDTWLIWKLTGGKVHASDVSNASRTMLFNIHSLDWDQEILDYLKIPRSILPKVQASSEFYGFVQSSLWSNKAKGKVPITGVAGDQQSALFGQMCTEVGMVKNTYGTGCFTLVNTGQKPVNSKNRLLTTIAWKLGNEKTIYALEGSVFVAGAAIQWLRDSLRILYNAALSDFYSSLVKDNQRVYVVPAFTGLGAPYWDSYAKGAIFGLERGTKNEHIIKATLESIAYQSNDLIKAMEKDLGQKITLLKVDGGASKSDYLMNFQASISNLDVHRPANVETTALGAAYLAGLAVGFWKDIKEIQKMIKIDHQFKPSVDQKEVDVLLKGWNEAVKRVLNWQKDIE</sequence>